<comment type="function">
    <text evidence="1">Sequence-specific transcription factor which is part of a developmental regulatory system that provides cells with specific positional identities on the anterior-posterior axis. Also binds to its own promoter. Binds specifically to the motif 5'-CYYNATTA[TG]Y-3' (By similarity).</text>
</comment>
<comment type="subunit">
    <text evidence="2">Forms a DNA-binding heterodimer with transcription factor PBX1.</text>
</comment>
<comment type="subcellular location">
    <subcellularLocation>
        <location>Nucleus</location>
    </subcellularLocation>
</comment>
<comment type="similarity">
    <text evidence="5">Belongs to the Antp homeobox family.</text>
</comment>
<protein>
    <recommendedName>
        <fullName>Homeobox protein Hox-A5</fullName>
    </recommendedName>
    <alternativeName>
        <fullName>Homeobox protein Hox-1.3</fullName>
    </alternativeName>
</protein>
<gene>
    <name type="primary">Hoxa5</name>
    <name type="synonym">Hox-1.3</name>
    <name type="synonym">Hoxa-5</name>
</gene>
<keyword id="KW-0217">Developmental protein</keyword>
<keyword id="KW-0238">DNA-binding</keyword>
<keyword id="KW-0371">Homeobox</keyword>
<keyword id="KW-0539">Nucleus</keyword>
<keyword id="KW-1185">Reference proteome</keyword>
<keyword id="KW-0804">Transcription</keyword>
<keyword id="KW-0805">Transcription regulation</keyword>
<name>HXA5_RAT</name>
<dbReference type="EMBL" id="L03556">
    <property type="protein sequence ID" value="AAA67844.1"/>
    <property type="molecule type" value="mRNA"/>
</dbReference>
<dbReference type="PIR" id="I65197">
    <property type="entry name" value="I65197"/>
</dbReference>
<dbReference type="FunCoup" id="P52949">
    <property type="interactions" value="130"/>
</dbReference>
<dbReference type="STRING" id="10116.ENSRNOP00000008523"/>
<dbReference type="PhosphoSitePlus" id="P52949"/>
<dbReference type="AGR" id="RGD:620609"/>
<dbReference type="RGD" id="620609">
    <property type="gene designation" value="Hoxa5"/>
</dbReference>
<dbReference type="eggNOG" id="KOG0489">
    <property type="taxonomic scope" value="Eukaryota"/>
</dbReference>
<dbReference type="InParanoid" id="P52949"/>
<dbReference type="PhylomeDB" id="P52949"/>
<dbReference type="Proteomes" id="UP000002494">
    <property type="component" value="Unplaced"/>
</dbReference>
<dbReference type="GO" id="GO:0005634">
    <property type="term" value="C:nucleus"/>
    <property type="evidence" value="ECO:0000266"/>
    <property type="project" value="RGD"/>
</dbReference>
<dbReference type="GO" id="GO:0003677">
    <property type="term" value="F:DNA binding"/>
    <property type="evidence" value="ECO:0000266"/>
    <property type="project" value="RGD"/>
</dbReference>
<dbReference type="GO" id="GO:0001228">
    <property type="term" value="F:DNA-binding transcription activator activity, RNA polymerase II-specific"/>
    <property type="evidence" value="ECO:0000266"/>
    <property type="project" value="RGD"/>
</dbReference>
<dbReference type="GO" id="GO:0003700">
    <property type="term" value="F:DNA-binding transcription factor activity"/>
    <property type="evidence" value="ECO:0000266"/>
    <property type="project" value="RGD"/>
</dbReference>
<dbReference type="GO" id="GO:0000981">
    <property type="term" value="F:DNA-binding transcription factor activity, RNA polymerase II-specific"/>
    <property type="evidence" value="ECO:0000318"/>
    <property type="project" value="GO_Central"/>
</dbReference>
<dbReference type="GO" id="GO:0000978">
    <property type="term" value="F:RNA polymerase II cis-regulatory region sequence-specific DNA binding"/>
    <property type="evidence" value="ECO:0000266"/>
    <property type="project" value="RGD"/>
</dbReference>
<dbReference type="GO" id="GO:1990837">
    <property type="term" value="F:sequence-specific double-stranded DNA binding"/>
    <property type="evidence" value="ECO:0000266"/>
    <property type="project" value="RGD"/>
</dbReference>
<dbReference type="GO" id="GO:0009952">
    <property type="term" value="P:anterior/posterior pattern specification"/>
    <property type="evidence" value="ECO:0000266"/>
    <property type="project" value="RGD"/>
</dbReference>
<dbReference type="GO" id="GO:0060435">
    <property type="term" value="P:bronchiole development"/>
    <property type="evidence" value="ECO:0000266"/>
    <property type="project" value="RGD"/>
</dbReference>
<dbReference type="GO" id="GO:0060536">
    <property type="term" value="P:cartilage morphogenesis"/>
    <property type="evidence" value="ECO:0000266"/>
    <property type="project" value="RGD"/>
</dbReference>
<dbReference type="GO" id="GO:0016477">
    <property type="term" value="P:cell migration"/>
    <property type="evidence" value="ECO:0000266"/>
    <property type="project" value="RGD"/>
</dbReference>
<dbReference type="GO" id="GO:0060764">
    <property type="term" value="P:cell-cell signaling involved in mammary gland development"/>
    <property type="evidence" value="ECO:0000266"/>
    <property type="project" value="RGD"/>
</dbReference>
<dbReference type="GO" id="GO:0048706">
    <property type="term" value="P:embryonic skeletal system development"/>
    <property type="evidence" value="ECO:0000266"/>
    <property type="project" value="RGD"/>
</dbReference>
<dbReference type="GO" id="GO:0048704">
    <property type="term" value="P:embryonic skeletal system morphogenesis"/>
    <property type="evidence" value="ECO:0000266"/>
    <property type="project" value="RGD"/>
</dbReference>
<dbReference type="GO" id="GO:0060441">
    <property type="term" value="P:epithelial tube branching involved in lung morphogenesis"/>
    <property type="evidence" value="ECO:0000266"/>
    <property type="project" value="RGD"/>
</dbReference>
<dbReference type="GO" id="GO:0060574">
    <property type="term" value="P:intestinal epithelial cell maturation"/>
    <property type="evidence" value="ECO:0000266"/>
    <property type="project" value="RGD"/>
</dbReference>
<dbReference type="GO" id="GO:0060481">
    <property type="term" value="P:lobar bronchus epithelium development"/>
    <property type="evidence" value="ECO:0000266"/>
    <property type="project" value="RGD"/>
</dbReference>
<dbReference type="GO" id="GO:0048286">
    <property type="term" value="P:lung alveolus development"/>
    <property type="evidence" value="ECO:0000266"/>
    <property type="project" value="RGD"/>
</dbReference>
<dbReference type="GO" id="GO:0030324">
    <property type="term" value="P:lung development"/>
    <property type="evidence" value="ECO:0000266"/>
    <property type="project" value="RGD"/>
</dbReference>
<dbReference type="GO" id="GO:0060480">
    <property type="term" value="P:lung goblet cell differentiation"/>
    <property type="evidence" value="ECO:0000266"/>
    <property type="project" value="RGD"/>
</dbReference>
<dbReference type="GO" id="GO:0060484">
    <property type="term" value="P:lung-associated mesenchyme development"/>
    <property type="evidence" value="ECO:0000266"/>
    <property type="project" value="RGD"/>
</dbReference>
<dbReference type="GO" id="GO:0060749">
    <property type="term" value="P:mammary gland alveolus development"/>
    <property type="evidence" value="ECO:0000266"/>
    <property type="project" value="RGD"/>
</dbReference>
<dbReference type="GO" id="GO:0060644">
    <property type="term" value="P:mammary gland epithelial cell differentiation"/>
    <property type="evidence" value="ECO:0000266"/>
    <property type="project" value="RGD"/>
</dbReference>
<dbReference type="GO" id="GO:0060638">
    <property type="term" value="P:mesenchymal-epithelial cell signaling"/>
    <property type="evidence" value="ECO:0000266"/>
    <property type="project" value="RGD"/>
</dbReference>
<dbReference type="GO" id="GO:0002009">
    <property type="term" value="P:morphogenesis of an epithelium"/>
    <property type="evidence" value="ECO:0000266"/>
    <property type="project" value="RGD"/>
</dbReference>
<dbReference type="GO" id="GO:0035264">
    <property type="term" value="P:multicellular organism growth"/>
    <property type="evidence" value="ECO:0000266"/>
    <property type="project" value="RGD"/>
</dbReference>
<dbReference type="GO" id="GO:0016525">
    <property type="term" value="P:negative regulation of angiogenesis"/>
    <property type="evidence" value="ECO:0000266"/>
    <property type="project" value="RGD"/>
</dbReference>
<dbReference type="GO" id="GO:0045647">
    <property type="term" value="P:negative regulation of erythrocyte differentiation"/>
    <property type="evidence" value="ECO:0000266"/>
    <property type="project" value="RGD"/>
</dbReference>
<dbReference type="GO" id="GO:0007389">
    <property type="term" value="P:pattern specification process"/>
    <property type="evidence" value="ECO:0000266"/>
    <property type="project" value="RGD"/>
</dbReference>
<dbReference type="GO" id="GO:0043065">
    <property type="term" value="P:positive regulation of apoptotic process"/>
    <property type="evidence" value="ECO:0000266"/>
    <property type="project" value="RGD"/>
</dbReference>
<dbReference type="GO" id="GO:0010628">
    <property type="term" value="P:positive regulation of gene expression"/>
    <property type="evidence" value="ECO:0000266"/>
    <property type="project" value="RGD"/>
</dbReference>
<dbReference type="GO" id="GO:0045639">
    <property type="term" value="P:positive regulation of myeloid cell differentiation"/>
    <property type="evidence" value="ECO:0000266"/>
    <property type="project" value="RGD"/>
</dbReference>
<dbReference type="GO" id="GO:0045944">
    <property type="term" value="P:positive regulation of transcription by RNA polymerase II"/>
    <property type="evidence" value="ECO:0000266"/>
    <property type="project" value="RGD"/>
</dbReference>
<dbReference type="GO" id="GO:0033599">
    <property type="term" value="P:regulation of mammary gland epithelial cell proliferation"/>
    <property type="evidence" value="ECO:0000266"/>
    <property type="project" value="RGD"/>
</dbReference>
<dbReference type="GO" id="GO:0006357">
    <property type="term" value="P:regulation of transcription by RNA polymerase II"/>
    <property type="evidence" value="ECO:0000318"/>
    <property type="project" value="GO_Central"/>
</dbReference>
<dbReference type="GO" id="GO:0007585">
    <property type="term" value="P:respiratory gaseous exchange by respiratory system"/>
    <property type="evidence" value="ECO:0000266"/>
    <property type="project" value="RGD"/>
</dbReference>
<dbReference type="GO" id="GO:0003016">
    <property type="term" value="P:respiratory system process"/>
    <property type="evidence" value="ECO:0000266"/>
    <property type="project" value="RGD"/>
</dbReference>
<dbReference type="GO" id="GO:0001501">
    <property type="term" value="P:skeletal system development"/>
    <property type="evidence" value="ECO:0000266"/>
    <property type="project" value="RGD"/>
</dbReference>
<dbReference type="GO" id="GO:0030878">
    <property type="term" value="P:thyroid gland development"/>
    <property type="evidence" value="ECO:0000266"/>
    <property type="project" value="RGD"/>
</dbReference>
<dbReference type="GO" id="GO:0060535">
    <property type="term" value="P:trachea cartilage morphogenesis"/>
    <property type="evidence" value="ECO:0000266"/>
    <property type="project" value="RGD"/>
</dbReference>
<dbReference type="GO" id="GO:0060439">
    <property type="term" value="P:trachea morphogenesis"/>
    <property type="evidence" value="ECO:0000266"/>
    <property type="project" value="RGD"/>
</dbReference>
<dbReference type="CDD" id="cd00086">
    <property type="entry name" value="homeodomain"/>
    <property type="match status" value="1"/>
</dbReference>
<dbReference type="FunFam" id="1.10.10.60:FF:000055">
    <property type="entry name" value="Homeobox protein Hox-A5"/>
    <property type="match status" value="1"/>
</dbReference>
<dbReference type="Gene3D" id="1.10.10.60">
    <property type="entry name" value="Homeodomain-like"/>
    <property type="match status" value="1"/>
</dbReference>
<dbReference type="InterPro" id="IPR050296">
    <property type="entry name" value="Antp_homeobox"/>
</dbReference>
<dbReference type="InterPro" id="IPR001356">
    <property type="entry name" value="HD"/>
</dbReference>
<dbReference type="InterPro" id="IPR020479">
    <property type="entry name" value="HD_metazoa"/>
</dbReference>
<dbReference type="InterPro" id="IPR017995">
    <property type="entry name" value="Homeobox_antennapedia"/>
</dbReference>
<dbReference type="InterPro" id="IPR001827">
    <property type="entry name" value="Homeobox_Antennapedia_CS"/>
</dbReference>
<dbReference type="InterPro" id="IPR017970">
    <property type="entry name" value="Homeobox_CS"/>
</dbReference>
<dbReference type="InterPro" id="IPR009057">
    <property type="entry name" value="Homeodomain-like_sf"/>
</dbReference>
<dbReference type="PANTHER" id="PTHR45659">
    <property type="entry name" value="HOMEOBOX PROTEIN HOX"/>
    <property type="match status" value="1"/>
</dbReference>
<dbReference type="PANTHER" id="PTHR45659:SF10">
    <property type="entry name" value="HOMEOBOX PROTEIN HOX-A5"/>
    <property type="match status" value="1"/>
</dbReference>
<dbReference type="Pfam" id="PF00046">
    <property type="entry name" value="Homeodomain"/>
    <property type="match status" value="1"/>
</dbReference>
<dbReference type="PRINTS" id="PR00025">
    <property type="entry name" value="ANTENNAPEDIA"/>
</dbReference>
<dbReference type="PRINTS" id="PR00024">
    <property type="entry name" value="HOMEOBOX"/>
</dbReference>
<dbReference type="SMART" id="SM00389">
    <property type="entry name" value="HOX"/>
    <property type="match status" value="1"/>
</dbReference>
<dbReference type="SUPFAM" id="SSF46689">
    <property type="entry name" value="Homeodomain-like"/>
    <property type="match status" value="1"/>
</dbReference>
<dbReference type="PROSITE" id="PS00032">
    <property type="entry name" value="ANTENNAPEDIA"/>
    <property type="match status" value="1"/>
</dbReference>
<dbReference type="PROSITE" id="PS00027">
    <property type="entry name" value="HOMEOBOX_1"/>
    <property type="match status" value="1"/>
</dbReference>
<dbReference type="PROSITE" id="PS50071">
    <property type="entry name" value="HOMEOBOX_2"/>
    <property type="match status" value="1"/>
</dbReference>
<accession>P52949</accession>
<reference key="1">
    <citation type="journal article" date="1994" name="BioTechniques">
        <title>Cloning and sequence analysis of homeobox transcription factor cDNAs with an inosine-containing probe.</title>
        <authorList>
            <person name="Gorski D.H."/>
            <person name="LePage D.F."/>
            <person name="Walsh K."/>
        </authorList>
    </citation>
    <scope>NUCLEOTIDE SEQUENCE [MRNA]</scope>
    <source>
        <tissue>Aorta</tissue>
    </source>
</reference>
<feature type="chain" id="PRO_0000200059" description="Homeobox protein Hox-A5">
    <location>
        <begin position="1" status="less than"/>
        <end position="233" status="greater than"/>
    </location>
</feature>
<feature type="DNA-binding region" description="Homeobox" evidence="3">
    <location>
        <begin position="174"/>
        <end position="233"/>
    </location>
</feature>
<feature type="region of interest" description="Disordered" evidence="4">
    <location>
        <begin position="1"/>
        <end position="101"/>
    </location>
</feature>
<feature type="region of interest" description="Disordered" evidence="4">
    <location>
        <begin position="118"/>
        <end position="154"/>
    </location>
</feature>
<feature type="short sequence motif" description="Antp-type hexapeptide">
    <location>
        <begin position="155"/>
        <end position="160"/>
    </location>
</feature>
<feature type="compositionally biased region" description="Polar residues" evidence="4">
    <location>
        <begin position="1"/>
        <end position="11"/>
    </location>
</feature>
<feature type="compositionally biased region" description="Low complexity" evidence="4">
    <location>
        <begin position="45"/>
        <end position="65"/>
    </location>
</feature>
<feature type="compositionally biased region" description="Low complexity" evidence="4">
    <location>
        <begin position="133"/>
        <end position="145"/>
    </location>
</feature>
<feature type="non-terminal residue">
    <location>
        <position position="1"/>
    </location>
</feature>
<feature type="non-terminal residue">
    <location>
        <position position="233"/>
    </location>
</feature>
<organism>
    <name type="scientific">Rattus norvegicus</name>
    <name type="common">Rat</name>
    <dbReference type="NCBI Taxonomy" id="10116"/>
    <lineage>
        <taxon>Eukaryota</taxon>
        <taxon>Metazoa</taxon>
        <taxon>Chordata</taxon>
        <taxon>Craniata</taxon>
        <taxon>Vertebrata</taxon>
        <taxon>Euteleostomi</taxon>
        <taxon>Mammalia</taxon>
        <taxon>Eutheria</taxon>
        <taxon>Euarchontoglires</taxon>
        <taxon>Glires</taxon>
        <taxon>Rodentia</taxon>
        <taxon>Myomorpha</taxon>
        <taxon>Muroidea</taxon>
        <taxon>Muridae</taxon>
        <taxon>Murinae</taxon>
        <taxon>Rattus</taxon>
    </lineage>
</organism>
<evidence type="ECO:0000250" key="1"/>
<evidence type="ECO:0000250" key="2">
    <source>
        <dbReference type="UniProtKB" id="P20719"/>
    </source>
</evidence>
<evidence type="ECO:0000255" key="3">
    <source>
        <dbReference type="PROSITE-ProRule" id="PRU00108"/>
    </source>
</evidence>
<evidence type="ECO:0000256" key="4">
    <source>
        <dbReference type="SAM" id="MobiDB-lite"/>
    </source>
</evidence>
<evidence type="ECO:0000305" key="5"/>
<proteinExistence type="evidence at transcript level"/>
<sequence>HNYGDHSSVSEQFRDSASMHSGRYGYGYNGMDLSVGRSGSGHFGSGEXXRSYXAGASAAPAEPRYSQPATSTHSPPPDPLPCSAVAPLPGSDTHHGGKNSLGNSSGCSANCGSTHISSREGVGTASAAEEDAPASSEQAGAQSEPSPAPPAQPQIYPWMRKLHISHDNIGGPEGKRARTCYTRYQTLELEKEFHFNRYLTRRRRIEIAHALCLSERQIKIWFQNRRMKWKKDK</sequence>